<evidence type="ECO:0000255" key="1">
    <source>
        <dbReference type="HAMAP-Rule" id="MF_01345"/>
    </source>
</evidence>
<evidence type="ECO:0000305" key="2"/>
<name>RS17_MESHJ</name>
<keyword id="KW-0687">Ribonucleoprotein</keyword>
<keyword id="KW-0689">Ribosomal protein</keyword>
<keyword id="KW-0694">RNA-binding</keyword>
<keyword id="KW-0699">rRNA-binding</keyword>
<protein>
    <recommendedName>
        <fullName evidence="1">Small ribosomal subunit protein uS17</fullName>
    </recommendedName>
    <alternativeName>
        <fullName evidence="2">30S ribosomal protein S17</fullName>
    </alternativeName>
</protein>
<dbReference type="EMBL" id="AE017243">
    <property type="protein sequence ID" value="AAZ44272.2"/>
    <property type="molecule type" value="Genomic_DNA"/>
</dbReference>
<dbReference type="RefSeq" id="WP_014579611.1">
    <property type="nucleotide sequence ID" value="NC_007295.1"/>
</dbReference>
<dbReference type="SMR" id="Q4AAE9"/>
<dbReference type="GeneID" id="41334484"/>
<dbReference type="KEGG" id="mhj:MHJ_0181"/>
<dbReference type="eggNOG" id="COG0186">
    <property type="taxonomic scope" value="Bacteria"/>
</dbReference>
<dbReference type="HOGENOM" id="CLU_073626_1_0_14"/>
<dbReference type="OrthoDB" id="9811714at2"/>
<dbReference type="Proteomes" id="UP000000548">
    <property type="component" value="Chromosome"/>
</dbReference>
<dbReference type="GO" id="GO:0022627">
    <property type="term" value="C:cytosolic small ribosomal subunit"/>
    <property type="evidence" value="ECO:0007669"/>
    <property type="project" value="TreeGrafter"/>
</dbReference>
<dbReference type="GO" id="GO:0019843">
    <property type="term" value="F:rRNA binding"/>
    <property type="evidence" value="ECO:0007669"/>
    <property type="project" value="UniProtKB-UniRule"/>
</dbReference>
<dbReference type="GO" id="GO:0003735">
    <property type="term" value="F:structural constituent of ribosome"/>
    <property type="evidence" value="ECO:0007669"/>
    <property type="project" value="InterPro"/>
</dbReference>
<dbReference type="GO" id="GO:0006412">
    <property type="term" value="P:translation"/>
    <property type="evidence" value="ECO:0007669"/>
    <property type="project" value="UniProtKB-UniRule"/>
</dbReference>
<dbReference type="CDD" id="cd00364">
    <property type="entry name" value="Ribosomal_uS17"/>
    <property type="match status" value="1"/>
</dbReference>
<dbReference type="Gene3D" id="2.40.50.140">
    <property type="entry name" value="Nucleic acid-binding proteins"/>
    <property type="match status" value="1"/>
</dbReference>
<dbReference type="HAMAP" id="MF_01345_B">
    <property type="entry name" value="Ribosomal_uS17_B"/>
    <property type="match status" value="1"/>
</dbReference>
<dbReference type="InterPro" id="IPR012340">
    <property type="entry name" value="NA-bd_OB-fold"/>
</dbReference>
<dbReference type="InterPro" id="IPR000266">
    <property type="entry name" value="Ribosomal_uS17"/>
</dbReference>
<dbReference type="InterPro" id="IPR019984">
    <property type="entry name" value="Ribosomal_uS17_bact/chlr"/>
</dbReference>
<dbReference type="InterPro" id="IPR019979">
    <property type="entry name" value="Ribosomal_uS17_CS"/>
</dbReference>
<dbReference type="NCBIfam" id="NF004123">
    <property type="entry name" value="PRK05610.1"/>
    <property type="match status" value="1"/>
</dbReference>
<dbReference type="NCBIfam" id="TIGR03635">
    <property type="entry name" value="uS17_bact"/>
    <property type="match status" value="1"/>
</dbReference>
<dbReference type="PANTHER" id="PTHR10744">
    <property type="entry name" value="40S RIBOSOMAL PROTEIN S11 FAMILY MEMBER"/>
    <property type="match status" value="1"/>
</dbReference>
<dbReference type="PANTHER" id="PTHR10744:SF1">
    <property type="entry name" value="SMALL RIBOSOMAL SUBUNIT PROTEIN US17M"/>
    <property type="match status" value="1"/>
</dbReference>
<dbReference type="Pfam" id="PF00366">
    <property type="entry name" value="Ribosomal_S17"/>
    <property type="match status" value="1"/>
</dbReference>
<dbReference type="PRINTS" id="PR00973">
    <property type="entry name" value="RIBOSOMALS17"/>
</dbReference>
<dbReference type="SUPFAM" id="SSF50249">
    <property type="entry name" value="Nucleic acid-binding proteins"/>
    <property type="match status" value="1"/>
</dbReference>
<dbReference type="PROSITE" id="PS00056">
    <property type="entry name" value="RIBOSOMAL_S17"/>
    <property type="match status" value="1"/>
</dbReference>
<comment type="function">
    <text evidence="1">One of the primary rRNA binding proteins, it binds specifically to the 5'-end of 16S ribosomal RNA.</text>
</comment>
<comment type="subunit">
    <text evidence="1">Part of the 30S ribosomal subunit.</text>
</comment>
<comment type="similarity">
    <text evidence="1">Belongs to the universal ribosomal protein uS17 family.</text>
</comment>
<feature type="chain" id="PRO_0000233510" description="Small ribosomal subunit protein uS17">
    <location>
        <begin position="1"/>
        <end position="95"/>
    </location>
</feature>
<sequence>MNNLTLEKKAQTRNLRKTLQGIVIRTSPKTIMVEVETAYKHKLYAKRFKKRKKFNTHDEKNLAEVGDFVKIAECRPISKTKHFRLVEVLQKKGEI</sequence>
<gene>
    <name evidence="1" type="primary">rpsQ</name>
    <name type="ordered locus">MHJ_0181</name>
</gene>
<reference key="1">
    <citation type="journal article" date="2005" name="J. Bacteriol.">
        <title>Swine and poultry pathogens: the complete genome sequences of two strains of Mycoplasma hyopneumoniae and a strain of Mycoplasma synoviae.</title>
        <authorList>
            <person name="Vasconcelos A.T.R."/>
            <person name="Ferreira H.B."/>
            <person name="Bizarro C.V."/>
            <person name="Bonatto S.L."/>
            <person name="Carvalho M.O."/>
            <person name="Pinto P.M."/>
            <person name="Almeida D.F."/>
            <person name="Almeida L.G.P."/>
            <person name="Almeida R."/>
            <person name="Alves-Junior L."/>
            <person name="Assuncao E.N."/>
            <person name="Azevedo V.A.C."/>
            <person name="Bogo M.R."/>
            <person name="Brigido M.M."/>
            <person name="Brocchi M."/>
            <person name="Burity H.A."/>
            <person name="Camargo A.A."/>
            <person name="Camargo S.S."/>
            <person name="Carepo M.S."/>
            <person name="Carraro D.M."/>
            <person name="de Mattos Cascardo J.C."/>
            <person name="Castro L.A."/>
            <person name="Cavalcanti G."/>
            <person name="Chemale G."/>
            <person name="Collevatti R.G."/>
            <person name="Cunha C.W."/>
            <person name="Dallagiovanna B."/>
            <person name="Dambros B.P."/>
            <person name="Dellagostin O.A."/>
            <person name="Falcao C."/>
            <person name="Fantinatti-Garboggini F."/>
            <person name="Felipe M.S.S."/>
            <person name="Fiorentin L."/>
            <person name="Franco G.R."/>
            <person name="Freitas N.S.A."/>
            <person name="Frias D."/>
            <person name="Grangeiro T.B."/>
            <person name="Grisard E.C."/>
            <person name="Guimaraes C.T."/>
            <person name="Hungria M."/>
            <person name="Jardim S.N."/>
            <person name="Krieger M.A."/>
            <person name="Laurino J.P."/>
            <person name="Lima L.F.A."/>
            <person name="Lopes M.I."/>
            <person name="Loreto E.L.S."/>
            <person name="Madeira H.M.F."/>
            <person name="Manfio G.P."/>
            <person name="Maranhao A.Q."/>
            <person name="Martinkovics C.T."/>
            <person name="Medeiros S.R.B."/>
            <person name="Moreira M.A.M."/>
            <person name="Neiva M."/>
            <person name="Ramalho-Neto C.E."/>
            <person name="Nicolas M.F."/>
            <person name="Oliveira S.C."/>
            <person name="Paixao R.F.C."/>
            <person name="Pedrosa F.O."/>
            <person name="Pena S.D.J."/>
            <person name="Pereira M."/>
            <person name="Pereira-Ferrari L."/>
            <person name="Piffer I."/>
            <person name="Pinto L.S."/>
            <person name="Potrich D.P."/>
            <person name="Salim A.C.M."/>
            <person name="Santos F.R."/>
            <person name="Schmitt R."/>
            <person name="Schneider M.P.C."/>
            <person name="Schrank A."/>
            <person name="Schrank I.S."/>
            <person name="Schuck A.F."/>
            <person name="Seuanez H.N."/>
            <person name="Silva D.W."/>
            <person name="Silva R."/>
            <person name="Silva S.C."/>
            <person name="Soares C.M.A."/>
            <person name="Souza K.R.L."/>
            <person name="Souza R.C."/>
            <person name="Staats C.C."/>
            <person name="Steffens M.B.R."/>
            <person name="Teixeira S.M.R."/>
            <person name="Urmenyi T.P."/>
            <person name="Vainstein M.H."/>
            <person name="Zuccherato L.W."/>
            <person name="Simpson A.J.G."/>
            <person name="Zaha A."/>
        </authorList>
    </citation>
    <scope>NUCLEOTIDE SEQUENCE [LARGE SCALE GENOMIC DNA]</scope>
    <source>
        <strain>J / ATCC 25934 / NCTC 10110</strain>
    </source>
</reference>
<organism>
    <name type="scientific">Mesomycoplasma hyopneumoniae (strain J / ATCC 25934 / NCTC 10110)</name>
    <name type="common">Mycoplasma hyopneumoniae</name>
    <dbReference type="NCBI Taxonomy" id="262719"/>
    <lineage>
        <taxon>Bacteria</taxon>
        <taxon>Bacillati</taxon>
        <taxon>Mycoplasmatota</taxon>
        <taxon>Mycoplasmoidales</taxon>
        <taxon>Metamycoplasmataceae</taxon>
        <taxon>Mesomycoplasma</taxon>
    </lineage>
</organism>
<proteinExistence type="inferred from homology"/>
<accession>Q4AAE9</accession>